<organism>
    <name type="scientific">Drosophila yakuba</name>
    <name type="common">Fruit fly</name>
    <dbReference type="NCBI Taxonomy" id="7245"/>
    <lineage>
        <taxon>Eukaryota</taxon>
        <taxon>Metazoa</taxon>
        <taxon>Ecdysozoa</taxon>
        <taxon>Arthropoda</taxon>
        <taxon>Hexapoda</taxon>
        <taxon>Insecta</taxon>
        <taxon>Pterygota</taxon>
        <taxon>Neoptera</taxon>
        <taxon>Endopterygota</taxon>
        <taxon>Diptera</taxon>
        <taxon>Brachycera</taxon>
        <taxon>Muscomorpha</taxon>
        <taxon>Ephydroidea</taxon>
        <taxon>Drosophilidae</taxon>
        <taxon>Drosophila</taxon>
        <taxon>Sophophora</taxon>
    </lineage>
</organism>
<name>NPLP3_DROYA</name>
<gene>
    <name type="primary">Nplp3</name>
    <name type="ORF">GE23179</name>
</gene>
<gene>
    <name type="ORF">GE23099</name>
</gene>
<comment type="subcellular location">
    <subcellularLocation>
        <location evidence="2">Secreted</location>
    </subcellularLocation>
</comment>
<proteinExistence type="inferred from homology"/>
<evidence type="ECO:0000250" key="1"/>
<evidence type="ECO:0000250" key="2">
    <source>
        <dbReference type="UniProtKB" id="Q9VV28"/>
    </source>
</evidence>
<evidence type="ECO:0000255" key="3"/>
<evidence type="ECO:0000312" key="4">
    <source>
        <dbReference type="EMBL" id="AAQ09845.1"/>
    </source>
</evidence>
<protein>
    <recommendedName>
        <fullName>Neuropeptide-like 3</fullName>
    </recommendedName>
    <component>
        <recommendedName>
            <fullName>SHA-peptide</fullName>
        </recommendedName>
    </component>
    <component>
        <recommendedName>
            <fullName>VVI-amide peptide</fullName>
        </recommendedName>
    </component>
</protein>
<sequence length="86" mass="8351">MFKLCVFVALLSLAAAAPAPAPAPGLIAPGLVAPGIWGPTVVGSPLVAPQVVSVVPGAISHAAITQVHPSPLLIKSVHGLGPVVIG</sequence>
<feature type="signal peptide" evidence="3">
    <location>
        <begin position="1"/>
        <end position="16"/>
    </location>
</feature>
<feature type="propeptide" id="PRO_0000021849" evidence="2">
    <location>
        <begin position="17"/>
        <end position="50"/>
    </location>
</feature>
<feature type="peptide" id="PRO_0000021850" description="SHA-peptide" evidence="2">
    <location>
        <begin position="51"/>
        <end position="62"/>
    </location>
</feature>
<feature type="propeptide" id="PRO_0000021851" evidence="2">
    <location>
        <begin position="63"/>
        <end position="75"/>
    </location>
</feature>
<feature type="peptide" id="PRO_0000021852" description="VVI-amide peptide" evidence="2">
    <location>
        <begin position="76"/>
        <end position="85"/>
    </location>
</feature>
<feature type="modified residue" description="Isoleucine amide" evidence="1">
    <location>
        <position position="85"/>
    </location>
</feature>
<reference evidence="4" key="1">
    <citation type="journal article" date="2003" name="Genome Res.">
        <title>An evolutionary analysis of orphan genes in Drosophila.</title>
        <authorList>
            <person name="Domazet-Loso T."/>
            <person name="Tautz D."/>
        </authorList>
    </citation>
    <scope>NUCLEOTIDE SEQUENCE [MRNA] (NPLP3)</scope>
</reference>
<reference key="2">
    <citation type="journal article" date="2007" name="Nature">
        <title>Evolution of genes and genomes on the Drosophila phylogeny.</title>
        <authorList>
            <consortium name="Drosophila 12 genomes consortium"/>
        </authorList>
    </citation>
    <scope>NUCLEOTIDE SEQUENCE [LARGE SCALE GENOMIC DNA] (GE23099 AND NPLP3)</scope>
    <source>
        <strain>Tai18E2 / Tucson 14021-0261.01</strain>
    </source>
</reference>
<keyword id="KW-0027">Amidation</keyword>
<keyword id="KW-0527">Neuropeptide</keyword>
<keyword id="KW-0964">Secreted</keyword>
<keyword id="KW-0732">Signal</keyword>
<accession>Q71DC3</accession>
<accession>B4ITR5</accession>
<dbReference type="EMBL" id="AF531946">
    <property type="protein sequence ID" value="AAQ09845.1"/>
    <property type="molecule type" value="mRNA"/>
</dbReference>
<dbReference type="EMBL" id="CH891729">
    <property type="protein sequence ID" value="EDW99778.1"/>
    <property type="molecule type" value="Genomic_DNA"/>
</dbReference>
<dbReference type="EMBL" id="CH891801">
    <property type="protein sequence ID" value="EDW99932.1"/>
    <property type="molecule type" value="Genomic_DNA"/>
</dbReference>
<dbReference type="RefSeq" id="XP_002086531.1">
    <property type="nucleotide sequence ID" value="XM_002086495.2"/>
</dbReference>
<dbReference type="EnsemblMetazoa" id="FBtr0269617">
    <property type="protein sequence ID" value="FBpp0268109"/>
    <property type="gene ID" value="FBgn0240300"/>
</dbReference>
<dbReference type="EnsemblMetazoa" id="FBtr0269697">
    <property type="protein sequence ID" value="FBpp0268189"/>
    <property type="gene ID" value="FBgn0068114"/>
</dbReference>
<dbReference type="EnsemblMetazoa" id="XM_002086341.3">
    <property type="protein sequence ID" value="XP_002086377.1"/>
    <property type="gene ID" value="LOC6539487"/>
</dbReference>
<dbReference type="GeneID" id="6539487"/>
<dbReference type="KEGG" id="dya:Dyak_GE23099"/>
<dbReference type="KEGG" id="dya:Dyak_GE23179"/>
<dbReference type="CTD" id="59235"/>
<dbReference type="HOGENOM" id="CLU_2443129_0_0_1"/>
<dbReference type="OMA" id="MACQIVA"/>
<dbReference type="OrthoDB" id="7867794at2759"/>
<dbReference type="PhylomeDB" id="Q71DC3"/>
<dbReference type="Proteomes" id="UP000002282">
    <property type="component" value="Unassembled WGS sequence"/>
</dbReference>
<dbReference type="GO" id="GO:0005576">
    <property type="term" value="C:extracellular region"/>
    <property type="evidence" value="ECO:0007669"/>
    <property type="project" value="UniProtKB-SubCell"/>
</dbReference>
<dbReference type="GO" id="GO:0007218">
    <property type="term" value="P:neuropeptide signaling pathway"/>
    <property type="evidence" value="ECO:0007669"/>
    <property type="project" value="UniProtKB-KW"/>
</dbReference>